<protein>
    <recommendedName>
        <fullName evidence="1">Acetyl-coenzyme A carboxylase carboxyl transferase subunit alpha</fullName>
        <shortName evidence="1">ACCase subunit alpha</shortName>
        <shortName evidence="1">Acetyl-CoA carboxylase carboxyltransferase subunit alpha</shortName>
        <ecNumber evidence="1">2.1.3.15</ecNumber>
    </recommendedName>
</protein>
<gene>
    <name evidence="1" type="primary">accA</name>
    <name type="ordered locus">GK2741</name>
</gene>
<keyword id="KW-0067">ATP-binding</keyword>
<keyword id="KW-0963">Cytoplasm</keyword>
<keyword id="KW-0275">Fatty acid biosynthesis</keyword>
<keyword id="KW-0276">Fatty acid metabolism</keyword>
<keyword id="KW-0444">Lipid biosynthesis</keyword>
<keyword id="KW-0443">Lipid metabolism</keyword>
<keyword id="KW-0547">Nucleotide-binding</keyword>
<keyword id="KW-1185">Reference proteome</keyword>
<keyword id="KW-0808">Transferase</keyword>
<feature type="chain" id="PRO_0000223771" description="Acetyl-coenzyme A carboxylase carboxyl transferase subunit alpha">
    <location>
        <begin position="1"/>
        <end position="325"/>
    </location>
</feature>
<feature type="domain" description="CoA carboxyltransferase C-terminal" evidence="2">
    <location>
        <begin position="35"/>
        <end position="292"/>
    </location>
</feature>
<sequence>MVAELEFEKPLVELRRKIQELKEFMKTADVDLSAEIEKLEARLAKLENEIYANLTPWDRVQIARHPQRPTTLDYIERLFTNFLECHGDRCFGDDEAIVGGIAKYDGLPVTVIGHQRGKDTKENLRRNFGMPHPEGYRKALRLMKQAEKFSRPIICFIDTKGAYPGKAAEERGQSEAIARNLFEMAGLTVPVVCIVIGEGGSGGALALGVGNHIHMLENSTYSVISPEGAAAILWKDASLAQRAAETMKITAHDLKALGVIDEIIPEVKGGAHRNADEQAKEIDRVLRRSLKQLLALDGEELVRQRYEKFKQMGQVSFLPETIRAR</sequence>
<dbReference type="EC" id="2.1.3.15" evidence="1"/>
<dbReference type="EMBL" id="BA000043">
    <property type="protein sequence ID" value="BAD77026.1"/>
    <property type="molecule type" value="Genomic_DNA"/>
</dbReference>
<dbReference type="RefSeq" id="WP_011232215.1">
    <property type="nucleotide sequence ID" value="NC_006510.1"/>
</dbReference>
<dbReference type="SMR" id="Q5KWB0"/>
<dbReference type="STRING" id="235909.GK2741"/>
<dbReference type="GeneID" id="32064641"/>
<dbReference type="KEGG" id="gka:GK2741"/>
<dbReference type="eggNOG" id="COG0825">
    <property type="taxonomic scope" value="Bacteria"/>
</dbReference>
<dbReference type="HOGENOM" id="CLU_015486_0_2_9"/>
<dbReference type="UniPathway" id="UPA00655">
    <property type="reaction ID" value="UER00711"/>
</dbReference>
<dbReference type="Proteomes" id="UP000001172">
    <property type="component" value="Chromosome"/>
</dbReference>
<dbReference type="GO" id="GO:0009317">
    <property type="term" value="C:acetyl-CoA carboxylase complex"/>
    <property type="evidence" value="ECO:0007669"/>
    <property type="project" value="InterPro"/>
</dbReference>
<dbReference type="GO" id="GO:0003989">
    <property type="term" value="F:acetyl-CoA carboxylase activity"/>
    <property type="evidence" value="ECO:0007669"/>
    <property type="project" value="InterPro"/>
</dbReference>
<dbReference type="GO" id="GO:0005524">
    <property type="term" value="F:ATP binding"/>
    <property type="evidence" value="ECO:0007669"/>
    <property type="project" value="UniProtKB-KW"/>
</dbReference>
<dbReference type="GO" id="GO:0016743">
    <property type="term" value="F:carboxyl- or carbamoyltransferase activity"/>
    <property type="evidence" value="ECO:0007669"/>
    <property type="project" value="UniProtKB-UniRule"/>
</dbReference>
<dbReference type="GO" id="GO:0006633">
    <property type="term" value="P:fatty acid biosynthetic process"/>
    <property type="evidence" value="ECO:0007669"/>
    <property type="project" value="UniProtKB-KW"/>
</dbReference>
<dbReference type="GO" id="GO:2001295">
    <property type="term" value="P:malonyl-CoA biosynthetic process"/>
    <property type="evidence" value="ECO:0007669"/>
    <property type="project" value="UniProtKB-UniRule"/>
</dbReference>
<dbReference type="Gene3D" id="3.90.226.10">
    <property type="entry name" value="2-enoyl-CoA Hydratase, Chain A, domain 1"/>
    <property type="match status" value="1"/>
</dbReference>
<dbReference type="HAMAP" id="MF_00823">
    <property type="entry name" value="AcetylCoA_CT_alpha"/>
    <property type="match status" value="1"/>
</dbReference>
<dbReference type="InterPro" id="IPR001095">
    <property type="entry name" value="Acetyl_CoA_COase_a_su"/>
</dbReference>
<dbReference type="InterPro" id="IPR029045">
    <property type="entry name" value="ClpP/crotonase-like_dom_sf"/>
</dbReference>
<dbReference type="InterPro" id="IPR011763">
    <property type="entry name" value="COA_CT_C"/>
</dbReference>
<dbReference type="NCBIfam" id="TIGR00513">
    <property type="entry name" value="accA"/>
    <property type="match status" value="1"/>
</dbReference>
<dbReference type="NCBIfam" id="NF041504">
    <property type="entry name" value="AccA_sub"/>
    <property type="match status" value="1"/>
</dbReference>
<dbReference type="NCBIfam" id="NF004344">
    <property type="entry name" value="PRK05724.1"/>
    <property type="match status" value="1"/>
</dbReference>
<dbReference type="PANTHER" id="PTHR42853">
    <property type="entry name" value="ACETYL-COENZYME A CARBOXYLASE CARBOXYL TRANSFERASE SUBUNIT ALPHA"/>
    <property type="match status" value="1"/>
</dbReference>
<dbReference type="PANTHER" id="PTHR42853:SF3">
    <property type="entry name" value="ACETYL-COENZYME A CARBOXYLASE CARBOXYL TRANSFERASE SUBUNIT ALPHA, CHLOROPLASTIC"/>
    <property type="match status" value="1"/>
</dbReference>
<dbReference type="Pfam" id="PF03255">
    <property type="entry name" value="ACCA"/>
    <property type="match status" value="1"/>
</dbReference>
<dbReference type="PRINTS" id="PR01069">
    <property type="entry name" value="ACCCTRFRASEA"/>
</dbReference>
<dbReference type="SUPFAM" id="SSF52096">
    <property type="entry name" value="ClpP/crotonase"/>
    <property type="match status" value="1"/>
</dbReference>
<dbReference type="PROSITE" id="PS50989">
    <property type="entry name" value="COA_CT_CTER"/>
    <property type="match status" value="1"/>
</dbReference>
<name>ACCA_GEOKA</name>
<reference key="1">
    <citation type="journal article" date="2004" name="Nucleic Acids Res.">
        <title>Thermoadaptation trait revealed by the genome sequence of thermophilic Geobacillus kaustophilus.</title>
        <authorList>
            <person name="Takami H."/>
            <person name="Takaki Y."/>
            <person name="Chee G.-J."/>
            <person name="Nishi S."/>
            <person name="Shimamura S."/>
            <person name="Suzuki H."/>
            <person name="Matsui S."/>
            <person name="Uchiyama I."/>
        </authorList>
    </citation>
    <scope>NUCLEOTIDE SEQUENCE [LARGE SCALE GENOMIC DNA]</scope>
    <source>
        <strain>HTA426</strain>
    </source>
</reference>
<accession>Q5KWB0</accession>
<comment type="function">
    <text evidence="1">Component of the acetyl coenzyme A carboxylase (ACC) complex. First, biotin carboxylase catalyzes the carboxylation of biotin on its carrier protein (BCCP) and then the CO(2) group is transferred by the carboxyltransferase to acetyl-CoA to form malonyl-CoA.</text>
</comment>
<comment type="catalytic activity">
    <reaction evidence="1">
        <text>N(6)-carboxybiotinyl-L-lysyl-[protein] + acetyl-CoA = N(6)-biotinyl-L-lysyl-[protein] + malonyl-CoA</text>
        <dbReference type="Rhea" id="RHEA:54728"/>
        <dbReference type="Rhea" id="RHEA-COMP:10505"/>
        <dbReference type="Rhea" id="RHEA-COMP:10506"/>
        <dbReference type="ChEBI" id="CHEBI:57288"/>
        <dbReference type="ChEBI" id="CHEBI:57384"/>
        <dbReference type="ChEBI" id="CHEBI:83144"/>
        <dbReference type="ChEBI" id="CHEBI:83145"/>
        <dbReference type="EC" id="2.1.3.15"/>
    </reaction>
</comment>
<comment type="pathway">
    <text evidence="1">Lipid metabolism; malonyl-CoA biosynthesis; malonyl-CoA from acetyl-CoA: step 1/1.</text>
</comment>
<comment type="subunit">
    <text evidence="1">Acetyl-CoA carboxylase is a heterohexamer composed of biotin carboxyl carrier protein (AccB), biotin carboxylase (AccC) and two subunits each of ACCase subunit alpha (AccA) and ACCase subunit beta (AccD).</text>
</comment>
<comment type="subcellular location">
    <subcellularLocation>
        <location evidence="1">Cytoplasm</location>
    </subcellularLocation>
</comment>
<comment type="similarity">
    <text evidence="1">Belongs to the AccA family.</text>
</comment>
<evidence type="ECO:0000255" key="1">
    <source>
        <dbReference type="HAMAP-Rule" id="MF_00823"/>
    </source>
</evidence>
<evidence type="ECO:0000255" key="2">
    <source>
        <dbReference type="PROSITE-ProRule" id="PRU01137"/>
    </source>
</evidence>
<organism>
    <name type="scientific">Geobacillus kaustophilus (strain HTA426)</name>
    <dbReference type="NCBI Taxonomy" id="235909"/>
    <lineage>
        <taxon>Bacteria</taxon>
        <taxon>Bacillati</taxon>
        <taxon>Bacillota</taxon>
        <taxon>Bacilli</taxon>
        <taxon>Bacillales</taxon>
        <taxon>Anoxybacillaceae</taxon>
        <taxon>Geobacillus</taxon>
        <taxon>Geobacillus thermoleovorans group</taxon>
    </lineage>
</organism>
<proteinExistence type="inferred from homology"/>